<keyword id="KW-1003">Cell membrane</keyword>
<keyword id="KW-0472">Membrane</keyword>
<keyword id="KW-1185">Reference proteome</keyword>
<keyword id="KW-0812">Transmembrane</keyword>
<keyword id="KW-1133">Transmembrane helix</keyword>
<gene>
    <name type="ordered locus">AF_0488</name>
</gene>
<feature type="chain" id="PRO_0000127882" description="Uncharacterized protein AF_0488">
    <location>
        <begin position="1"/>
        <end position="106"/>
    </location>
</feature>
<feature type="transmembrane region" description="Helical" evidence="1">
    <location>
        <begin position="5"/>
        <end position="27"/>
    </location>
</feature>
<feature type="transmembrane region" description="Helical" evidence="1">
    <location>
        <begin position="42"/>
        <end position="64"/>
    </location>
</feature>
<feature type="transmembrane region" description="Helical" evidence="1">
    <location>
        <begin position="76"/>
        <end position="98"/>
    </location>
</feature>
<organism>
    <name type="scientific">Archaeoglobus fulgidus (strain ATCC 49558 / DSM 4304 / JCM 9628 / NBRC 100126 / VC-16)</name>
    <dbReference type="NCBI Taxonomy" id="224325"/>
    <lineage>
        <taxon>Archaea</taxon>
        <taxon>Methanobacteriati</taxon>
        <taxon>Methanobacteriota</taxon>
        <taxon>Archaeoglobi</taxon>
        <taxon>Archaeoglobales</taxon>
        <taxon>Archaeoglobaceae</taxon>
        <taxon>Archaeoglobus</taxon>
    </lineage>
</organism>
<proteinExistence type="predicted"/>
<evidence type="ECO:0000255" key="1"/>
<evidence type="ECO:0000305" key="2"/>
<name>Y488_ARCFU</name>
<comment type="subcellular location">
    <subcellularLocation>
        <location evidence="2">Cell membrane</location>
        <topology evidence="2">Multi-pass membrane protein</topology>
    </subcellularLocation>
</comment>
<sequence length="106" mass="11470">MKRLIFVIGVFIVALALSAFHWVGIIIGGLIVGYFSKNLKEAVAAGLALSLFIFGAFLAYLAYMGMLEKFLTLSPLPYISILLCMALAVISATITNFFSPFAVKQS</sequence>
<accession>O29762</accession>
<dbReference type="EMBL" id="AE000782">
    <property type="protein sequence ID" value="AAB90755.1"/>
    <property type="molecule type" value="Genomic_DNA"/>
</dbReference>
<dbReference type="PIR" id="H69310">
    <property type="entry name" value="H69310"/>
</dbReference>
<dbReference type="RefSeq" id="WP_010877995.1">
    <property type="nucleotide sequence ID" value="NC_000917.1"/>
</dbReference>
<dbReference type="SMR" id="O29762"/>
<dbReference type="STRING" id="224325.AF_0488"/>
<dbReference type="PaxDb" id="224325-AF_0488"/>
<dbReference type="EnsemblBacteria" id="AAB90755">
    <property type="protein sequence ID" value="AAB90755"/>
    <property type="gene ID" value="AF_0488"/>
</dbReference>
<dbReference type="KEGG" id="afu:AF_0488"/>
<dbReference type="eggNOG" id="arCOG11494">
    <property type="taxonomic scope" value="Archaea"/>
</dbReference>
<dbReference type="HOGENOM" id="CLU_2313678_0_0_2"/>
<dbReference type="Proteomes" id="UP000002199">
    <property type="component" value="Chromosome"/>
</dbReference>
<dbReference type="GO" id="GO:0005886">
    <property type="term" value="C:plasma membrane"/>
    <property type="evidence" value="ECO:0007669"/>
    <property type="project" value="UniProtKB-SubCell"/>
</dbReference>
<protein>
    <recommendedName>
        <fullName>Uncharacterized protein AF_0488</fullName>
    </recommendedName>
</protein>
<reference key="1">
    <citation type="journal article" date="1997" name="Nature">
        <title>The complete genome sequence of the hyperthermophilic, sulphate-reducing archaeon Archaeoglobus fulgidus.</title>
        <authorList>
            <person name="Klenk H.-P."/>
            <person name="Clayton R.A."/>
            <person name="Tomb J.-F."/>
            <person name="White O."/>
            <person name="Nelson K.E."/>
            <person name="Ketchum K.A."/>
            <person name="Dodson R.J."/>
            <person name="Gwinn M.L."/>
            <person name="Hickey E.K."/>
            <person name="Peterson J.D."/>
            <person name="Richardson D.L."/>
            <person name="Kerlavage A.R."/>
            <person name="Graham D.E."/>
            <person name="Kyrpides N.C."/>
            <person name="Fleischmann R.D."/>
            <person name="Quackenbush J."/>
            <person name="Lee N.H."/>
            <person name="Sutton G.G."/>
            <person name="Gill S.R."/>
            <person name="Kirkness E.F."/>
            <person name="Dougherty B.A."/>
            <person name="McKenney K."/>
            <person name="Adams M.D."/>
            <person name="Loftus B.J."/>
            <person name="Peterson S.N."/>
            <person name="Reich C.I."/>
            <person name="McNeil L.K."/>
            <person name="Badger J.H."/>
            <person name="Glodek A."/>
            <person name="Zhou L."/>
            <person name="Overbeek R."/>
            <person name="Gocayne J.D."/>
            <person name="Weidman J.F."/>
            <person name="McDonald L.A."/>
            <person name="Utterback T.R."/>
            <person name="Cotton M.D."/>
            <person name="Spriggs T."/>
            <person name="Artiach P."/>
            <person name="Kaine B.P."/>
            <person name="Sykes S.M."/>
            <person name="Sadow P.W."/>
            <person name="D'Andrea K.P."/>
            <person name="Bowman C."/>
            <person name="Fujii C."/>
            <person name="Garland S.A."/>
            <person name="Mason T.M."/>
            <person name="Olsen G.J."/>
            <person name="Fraser C.M."/>
            <person name="Smith H.O."/>
            <person name="Woese C.R."/>
            <person name="Venter J.C."/>
        </authorList>
    </citation>
    <scope>NUCLEOTIDE SEQUENCE [LARGE SCALE GENOMIC DNA]</scope>
    <source>
        <strain>ATCC 49558 / DSM 4304 / JCM 9628 / NBRC 100126 / VC-16</strain>
    </source>
</reference>